<accession>P35462</accession>
<accession>A1A4V5</accession>
<accession>Q4VBM8</accession>
<name>DRD3_HUMAN</name>
<reference key="1">
    <citation type="journal article" date="1990" name="C. R. Acad. Sci. III, Sci. Vie">
        <title>Gene cloning of human dopaminergic D3 receptor and identification of its chromosome.</title>
        <authorList>
            <person name="Giros B."/>
            <person name="Martres M.-P."/>
            <person name="Sokoloff P."/>
            <person name="Schwartz J.-C."/>
        </authorList>
    </citation>
    <scope>NUCLEOTIDE SEQUENCE [MRNA] (ISOFORM 1)</scope>
</reference>
<reference key="2">
    <citation type="journal article" date="1993" name="Proc. Natl. Acad. Sci. U.S.A.">
        <title>Selective loss of dopamine D3-type receptor mRNA expression in parietal and motor cortices of patients with chronic schizophrenia.</title>
        <authorList>
            <person name="Schmauss C."/>
            <person name="Haroutunian V."/>
            <person name="Davis K.L."/>
            <person name="Davidson M."/>
        </authorList>
    </citation>
    <scope>NUCLEOTIDE SEQUENCE [MRNA] (ISOFORM 3)</scope>
    <scope>VARIANT SER-9</scope>
    <source>
        <tissue>Brain</tissue>
    </source>
</reference>
<reference key="3">
    <citation type="journal article" date="1994" name="J. Biol. Chem.">
        <title>On the origin of mRNA encoding the truncated dopamine D3-type receptor D3nf and detection of D3nf-like immunoreactivity in human brain.</title>
        <authorList>
            <person name="Liu K."/>
            <person name="Bergson C."/>
            <person name="Levenson R."/>
            <person name="Schmauss C."/>
        </authorList>
    </citation>
    <scope>NUCLEOTIDE SEQUENCE [GENOMIC DNA]</scope>
    <scope>ALTERNATIVE SPLICING</scope>
    <source>
        <tissue>Brain</tissue>
    </source>
</reference>
<reference key="4">
    <citation type="submission" date="1995-07" db="EMBL/GenBank/DDBJ databases">
        <authorList>
            <person name="Fishburn C.S."/>
            <person name="Park B.-H."/>
            <person name="Fuchs S."/>
        </authorList>
    </citation>
    <scope>NUCLEOTIDE SEQUENCE [MRNA] (ISOFORM 1)</scope>
    <scope>VARIANT SER-9</scope>
</reference>
<reference key="5">
    <citation type="journal article" date="2006" name="Nature">
        <title>The DNA sequence, annotation and analysis of human chromosome 3.</title>
        <authorList>
            <person name="Muzny D.M."/>
            <person name="Scherer S.E."/>
            <person name="Kaul R."/>
            <person name="Wang J."/>
            <person name="Yu J."/>
            <person name="Sudbrak R."/>
            <person name="Buhay C.J."/>
            <person name="Chen R."/>
            <person name="Cree A."/>
            <person name="Ding Y."/>
            <person name="Dugan-Rocha S."/>
            <person name="Gill R."/>
            <person name="Gunaratne P."/>
            <person name="Harris R.A."/>
            <person name="Hawes A.C."/>
            <person name="Hernandez J."/>
            <person name="Hodgson A.V."/>
            <person name="Hume J."/>
            <person name="Jackson A."/>
            <person name="Khan Z.M."/>
            <person name="Kovar-Smith C."/>
            <person name="Lewis L.R."/>
            <person name="Lozado R.J."/>
            <person name="Metzker M.L."/>
            <person name="Milosavljevic A."/>
            <person name="Miner G.R."/>
            <person name="Morgan M.B."/>
            <person name="Nazareth L.V."/>
            <person name="Scott G."/>
            <person name="Sodergren E."/>
            <person name="Song X.-Z."/>
            <person name="Steffen D."/>
            <person name="Wei S."/>
            <person name="Wheeler D.A."/>
            <person name="Wright M.W."/>
            <person name="Worley K.C."/>
            <person name="Yuan Y."/>
            <person name="Zhang Z."/>
            <person name="Adams C.Q."/>
            <person name="Ansari-Lari M.A."/>
            <person name="Ayele M."/>
            <person name="Brown M.J."/>
            <person name="Chen G."/>
            <person name="Chen Z."/>
            <person name="Clendenning J."/>
            <person name="Clerc-Blankenburg K.P."/>
            <person name="Chen R."/>
            <person name="Chen Z."/>
            <person name="Davis C."/>
            <person name="Delgado O."/>
            <person name="Dinh H.H."/>
            <person name="Dong W."/>
            <person name="Draper H."/>
            <person name="Ernst S."/>
            <person name="Fu G."/>
            <person name="Gonzalez-Garay M.L."/>
            <person name="Garcia D.K."/>
            <person name="Gillett W."/>
            <person name="Gu J."/>
            <person name="Hao B."/>
            <person name="Haugen E."/>
            <person name="Havlak P."/>
            <person name="He X."/>
            <person name="Hennig S."/>
            <person name="Hu S."/>
            <person name="Huang W."/>
            <person name="Jackson L.R."/>
            <person name="Jacob L.S."/>
            <person name="Kelly S.H."/>
            <person name="Kube M."/>
            <person name="Levy R."/>
            <person name="Li Z."/>
            <person name="Liu B."/>
            <person name="Liu J."/>
            <person name="Liu W."/>
            <person name="Lu J."/>
            <person name="Maheshwari M."/>
            <person name="Nguyen B.-V."/>
            <person name="Okwuonu G.O."/>
            <person name="Palmeiri A."/>
            <person name="Pasternak S."/>
            <person name="Perez L.M."/>
            <person name="Phelps K.A."/>
            <person name="Plopper F.J."/>
            <person name="Qiang B."/>
            <person name="Raymond C."/>
            <person name="Rodriguez R."/>
            <person name="Saenphimmachak C."/>
            <person name="Santibanez J."/>
            <person name="Shen H."/>
            <person name="Shen Y."/>
            <person name="Subramanian S."/>
            <person name="Tabor P.E."/>
            <person name="Verduzco D."/>
            <person name="Waldron L."/>
            <person name="Wang J."/>
            <person name="Wang J."/>
            <person name="Wang Q."/>
            <person name="Williams G.A."/>
            <person name="Wong G.K.-S."/>
            <person name="Yao Z."/>
            <person name="Zhang J."/>
            <person name="Zhang X."/>
            <person name="Zhao G."/>
            <person name="Zhou J."/>
            <person name="Zhou Y."/>
            <person name="Nelson D."/>
            <person name="Lehrach H."/>
            <person name="Reinhardt R."/>
            <person name="Naylor S.L."/>
            <person name="Yang H."/>
            <person name="Olson M."/>
            <person name="Weinstock G."/>
            <person name="Gibbs R.A."/>
        </authorList>
    </citation>
    <scope>NUCLEOTIDE SEQUENCE [LARGE SCALE GENOMIC DNA]</scope>
</reference>
<reference key="6">
    <citation type="submission" date="2005-09" db="EMBL/GenBank/DDBJ databases">
        <authorList>
            <person name="Mural R.J."/>
            <person name="Istrail S."/>
            <person name="Sutton G.G."/>
            <person name="Florea L."/>
            <person name="Halpern A.L."/>
            <person name="Mobarry C.M."/>
            <person name="Lippert R."/>
            <person name="Walenz B."/>
            <person name="Shatkay H."/>
            <person name="Dew I."/>
            <person name="Miller J.R."/>
            <person name="Flanigan M.J."/>
            <person name="Edwards N.J."/>
            <person name="Bolanos R."/>
            <person name="Fasulo D."/>
            <person name="Halldorsson B.V."/>
            <person name="Hannenhalli S."/>
            <person name="Turner R."/>
            <person name="Yooseph S."/>
            <person name="Lu F."/>
            <person name="Nusskern D.R."/>
            <person name="Shue B.C."/>
            <person name="Zheng X.H."/>
            <person name="Zhong F."/>
            <person name="Delcher A.L."/>
            <person name="Huson D.H."/>
            <person name="Kravitz S.A."/>
            <person name="Mouchard L."/>
            <person name="Reinert K."/>
            <person name="Remington K.A."/>
            <person name="Clark A.G."/>
            <person name="Waterman M.S."/>
            <person name="Eichler E.E."/>
            <person name="Adams M.D."/>
            <person name="Hunkapiller M.W."/>
            <person name="Myers E.W."/>
            <person name="Venter J.C."/>
        </authorList>
    </citation>
    <scope>NUCLEOTIDE SEQUENCE [LARGE SCALE GENOMIC DNA]</scope>
    <scope>VARIANT SER-9</scope>
</reference>
<reference key="7">
    <citation type="journal article" date="2004" name="Genome Res.">
        <title>The status, quality, and expansion of the NIH full-length cDNA project: the Mammalian Gene Collection (MGC).</title>
        <authorList>
            <consortium name="The MGC Project Team"/>
        </authorList>
    </citation>
    <scope>NUCLEOTIDE SEQUENCE [LARGE SCALE MRNA] (ISOFORM 1)</scope>
    <scope>VARIANT SER-9</scope>
</reference>
<reference key="8">
    <citation type="journal article" date="1992" name="J. Med. Genet.">
        <title>Association between schizophrenia and homozygosity at the dopamine D3 receptor gene.</title>
        <authorList>
            <person name="Crocq M.A."/>
            <person name="Mant R."/>
            <person name="Asherson P."/>
            <person name="Williams J."/>
            <person name="Hode Y."/>
            <person name="Mayerova A."/>
            <person name="Collier D."/>
            <person name="Lannfelt L."/>
            <person name="Sokoloff P."/>
            <person name="Schwartz J.C."/>
        </authorList>
    </citation>
    <scope>INVOLVEMENT IN SCZD</scope>
    <scope>VARIANT SER-9</scope>
</reference>
<reference key="9">
    <citation type="journal article" date="1998" name="Am. J. Med. Genet.">
        <title>European multicentre association study of schizophrenia: a study of the DRD2 Ser311Cys and DRD3 Ser9Gly polymorphisms.</title>
        <authorList>
            <person name="Spurlock G."/>
            <person name="Williams J."/>
            <person name="McGuffin P."/>
            <person name="Aschauer H.N."/>
            <person name="Lenzinger E."/>
            <person name="Fuchs K."/>
            <person name="Sieghart W.C."/>
            <person name="Meszaros K."/>
            <person name="Fathi N."/>
            <person name="Laurent C."/>
            <person name="Mallet J."/>
            <person name="Macciardi F."/>
            <person name="Pedrini S."/>
            <person name="Gill M."/>
            <person name="Hawi Z."/>
            <person name="Gibson S."/>
            <person name="Jazin E.E."/>
            <person name="Yang H.T."/>
            <person name="Adolfsson R."/>
            <person name="Pato C.N."/>
            <person name="Dourado A.M."/>
            <person name="Owen M.J."/>
        </authorList>
    </citation>
    <scope>INVOLVEMENT IN SCZD</scope>
    <scope>VARIANT SER-9</scope>
</reference>
<reference key="10">
    <citation type="journal article" date="2006" name="Arch. Biochem. Biophys.">
        <title>Paralemmin interacts with D3 dopamine receptors: implications for membrane localization and cAMP signaling.</title>
        <authorList>
            <person name="Basile M."/>
            <person name="Lin R."/>
            <person name="Kabbani N."/>
            <person name="Karpa K."/>
            <person name="Kilimann M."/>
            <person name="Simpson I."/>
            <person name="Kester M."/>
        </authorList>
    </citation>
    <scope>INTERACTION WITH PALM</scope>
</reference>
<reference key="11">
    <citation type="journal article" date="2009" name="J. Biol. Chem.">
        <title>G protein-coupled receptor kinase 4 (GRK4) regulates the phosphorylation and function of the dopamine D3 receptor.</title>
        <authorList>
            <person name="Villar V.A.M."/>
            <person name="Jones J.E."/>
            <person name="Armando I."/>
            <person name="Palmes-Saloma C."/>
            <person name="Yu P."/>
            <person name="Pascua A.M."/>
            <person name="Keever L."/>
            <person name="Arnaldo F.B."/>
            <person name="Wang Z."/>
            <person name="Luo Y."/>
            <person name="Felder R.A."/>
            <person name="Jose P.A."/>
        </authorList>
    </citation>
    <scope>PHOSPHORYLATION BY GRK4</scope>
    <scope>SUBCELLULAR LOCATION</scope>
    <scope>INTERACTION WITH GRK4</scope>
    <scope>FUNCTION</scope>
</reference>
<reference key="12">
    <citation type="journal article" date="2015" name="Biochemistry">
        <title>G Protein-Coupled Receptors Directly Bind Filamin A with High Affinity and Promote Filamin Phosphorylation.</title>
        <authorList>
            <person name="Tirupula K.C."/>
            <person name="Ithychanda S.S."/>
            <person name="Mohan M.L."/>
            <person name="Naga Prasad S.V."/>
            <person name="Qin J."/>
            <person name="Karnik S.S."/>
        </authorList>
    </citation>
    <scope>INTERACTION WITH FLNA</scope>
</reference>
<reference key="13">
    <citation type="journal article" date="2016" name="Biochem. Biophys. Res. Commun.">
        <title>Palmitoylation of the carboxyl-terminal tail of dopamine D4 receptor is required for surface expression, endocytosis, and signaling.</title>
        <authorList>
            <person name="Zhang X."/>
            <person name="Kim K.M."/>
        </authorList>
    </citation>
    <scope>PALMITOYLATION</scope>
</reference>
<reference evidence="20" key="14">
    <citation type="journal article" date="2010" name="Science">
        <title>Structure of the human dopamine D3 receptor in complex with a D2/D3 selective antagonist.</title>
        <authorList>
            <person name="Chien E.Y."/>
            <person name="Liu W."/>
            <person name="Zhao Q."/>
            <person name="Katritch V."/>
            <person name="Han G.W."/>
            <person name="Hanson M.A."/>
            <person name="Shi L."/>
            <person name="Newman A.H."/>
            <person name="Javitch J.A."/>
            <person name="Cherezov V."/>
            <person name="Stevens R.C."/>
        </authorList>
    </citation>
    <scope>X-RAY CRYSTALLOGRAPHY (2.89 ANGSTROMS) OF 2-221 AND 319-400 IN COMPLEX WITH THE ANTAGONIST ETICLOPRIDE</scope>
    <scope>DISULFIDE BONDS</scope>
    <scope>MEMBRANE TOPOLOGY</scope>
</reference>
<reference key="15">
    <citation type="journal article" date="1992" name="Psychiatr. Genet.">
        <title>Amino-acid substitution in the dopamine D3 receptor as useful polymorphism for investigating psychiatric disorders.</title>
        <authorList>
            <person name="Lannfelt T."/>
            <person name="Sokoloff P."/>
            <person name="Martres M.-P."/>
            <person name="Pilon C."/>
            <person name="Giros B."/>
            <person name="Joensson E."/>
            <person name="Sedvall G."/>
            <person name="Schwartz J.-C."/>
        </authorList>
    </citation>
    <scope>VARIANT SER-9</scope>
</reference>
<reference key="16">
    <citation type="journal article" date="1997" name="Am. J. Med. Genet.">
        <title>Further evidence of no association between Ser9Gly polymorphism of dopamine D3 receptor gene and schizophrenia.</title>
        <authorList>
            <person name="Chen C.-H."/>
            <person name="Liu M.-Y."/>
            <person name="Wei F.-C."/>
            <person name="Koong F.-J."/>
            <person name="Hwu H.-G."/>
            <person name="Hsiao K.-J."/>
        </authorList>
    </citation>
    <scope>VARIANT SER-9</scope>
</reference>
<reference key="17">
    <citation type="journal article" date="1999" name="Nat. Genet.">
        <title>Characterization of single-nucleotide polymorphisms in coding regions of human genes.</title>
        <authorList>
            <person name="Cargill M."/>
            <person name="Altshuler D."/>
            <person name="Ireland J."/>
            <person name="Sklar P."/>
            <person name="Ardlie K."/>
            <person name="Patil N."/>
            <person name="Shaw N."/>
            <person name="Lane C.R."/>
            <person name="Lim E.P."/>
            <person name="Kalyanaraman N."/>
            <person name="Nemesh J."/>
            <person name="Ziaugra L."/>
            <person name="Friedland L."/>
            <person name="Rolfe A."/>
            <person name="Warrington J."/>
            <person name="Lipshutz R."/>
            <person name="Daley G.Q."/>
            <person name="Lander E.S."/>
        </authorList>
    </citation>
    <scope>VARIANT SER-9</scope>
</reference>
<reference key="18">
    <citation type="journal article" date="1999" name="Nat. Genet.">
        <authorList>
            <person name="Cargill M."/>
            <person name="Altshuler D."/>
            <person name="Ireland J."/>
            <person name="Sklar P."/>
            <person name="Ardlie K."/>
            <person name="Patil N."/>
            <person name="Shaw N."/>
            <person name="Lane C.R."/>
            <person name="Lim E.P."/>
            <person name="Kalyanaraman N."/>
            <person name="Nemesh J."/>
            <person name="Ziaugra L."/>
            <person name="Friedland L."/>
            <person name="Rolfe A."/>
            <person name="Warrington J."/>
            <person name="Lipshutz R."/>
            <person name="Daley G.Q."/>
            <person name="Lander E.S."/>
        </authorList>
    </citation>
    <scope>ERRATUM OF PUBMED:10391209</scope>
</reference>
<reference key="19">
    <citation type="journal article" date="2006" name="Clin. Genet.">
        <title>Linkage with the Ser9Gly DRD3 polymorphism in essential tremor families.</title>
        <authorList>
            <person name="Lucotte G."/>
            <person name="Lagarde J.-P."/>
            <person name="Funalot B."/>
            <person name="Sokoloff P."/>
        </authorList>
    </citation>
    <scope>VARIANT SER-9</scope>
    <scope>INVOLVEMENT IN SUSCEPTIBILITY TO ETM1</scope>
</reference>
<reference key="20">
    <citation type="journal article" date="2006" name="Proc. Natl. Acad. Sci. U.S.A.">
        <title>A functional variant of the dopamine D3 receptor is associated with risk and age-at-onset of essential tremor.</title>
        <authorList>
            <person name="Jeanneteau F."/>
            <person name="Funalot B."/>
            <person name="Jankovic J."/>
            <person name="Deng H."/>
            <person name="Lagarde J.-P."/>
            <person name="Lucotte G."/>
            <person name="Sokoloff P."/>
        </authorList>
    </citation>
    <scope>VARIANT SER-9</scope>
    <scope>INVOLVEMENT IN SUSCEPTIBILITY TO ETM1</scope>
</reference>
<feature type="chain" id="PRO_0000069397" description="D(3) dopamine receptor">
    <location>
        <begin position="1"/>
        <end position="400"/>
    </location>
</feature>
<feature type="topological domain" description="Extracellular" evidence="11">
    <location>
        <begin position="1"/>
        <end position="32"/>
    </location>
</feature>
<feature type="transmembrane region" description="Helical; Name=1" evidence="11">
    <location>
        <begin position="33"/>
        <end position="55"/>
    </location>
</feature>
<feature type="topological domain" description="Cytoplasmic" evidence="11">
    <location>
        <begin position="56"/>
        <end position="65"/>
    </location>
</feature>
<feature type="transmembrane region" description="Helical; Name=2" evidence="11">
    <location>
        <begin position="66"/>
        <end position="88"/>
    </location>
</feature>
<feature type="topological domain" description="Extracellular" evidence="11">
    <location>
        <begin position="89"/>
        <end position="104"/>
    </location>
</feature>
<feature type="transmembrane region" description="Helical; Name=3" evidence="11">
    <location>
        <begin position="105"/>
        <end position="126"/>
    </location>
</feature>
<feature type="topological domain" description="Cytoplasmic" evidence="11">
    <location>
        <begin position="127"/>
        <end position="149"/>
    </location>
</feature>
<feature type="transmembrane region" description="Helical; Name=4" evidence="11">
    <location>
        <begin position="150"/>
        <end position="170"/>
    </location>
</feature>
<feature type="topological domain" description="Extracellular" evidence="11">
    <location>
        <begin position="171"/>
        <end position="187"/>
    </location>
</feature>
<feature type="transmembrane region" description="Helical; Name=5" evidence="11">
    <location>
        <begin position="188"/>
        <end position="209"/>
    </location>
</feature>
<feature type="topological domain" description="Cytoplasmic" evidence="11">
    <location>
        <begin position="210"/>
        <end position="329"/>
    </location>
</feature>
<feature type="transmembrane region" description="Helical; Name=6" evidence="11">
    <location>
        <begin position="330"/>
        <end position="351"/>
    </location>
</feature>
<feature type="topological domain" description="Extracellular" evidence="11">
    <location>
        <begin position="352"/>
        <end position="366"/>
    </location>
</feature>
<feature type="transmembrane region" description="Helical; Name=7" evidence="11">
    <location>
        <begin position="367"/>
        <end position="386"/>
    </location>
</feature>
<feature type="topological domain" description="Cytoplasmic" evidence="11">
    <location>
        <begin position="387"/>
        <end position="400"/>
    </location>
</feature>
<feature type="binding site" evidence="11 20">
    <location>
        <position position="110"/>
    </location>
    <ligand>
        <name>eticlopride</name>
        <dbReference type="ChEBI" id="CHEBI:188152"/>
        <note>antagonist</note>
    </ligand>
</feature>
<feature type="binding site" evidence="11 20">
    <location>
        <position position="345"/>
    </location>
    <ligand>
        <name>eticlopride</name>
        <dbReference type="ChEBI" id="CHEBI:188152"/>
        <note>antagonist</note>
    </ligand>
</feature>
<feature type="binding site" evidence="11 20">
    <location>
        <position position="349"/>
    </location>
    <ligand>
        <name>eticlopride</name>
        <dbReference type="ChEBI" id="CHEBI:188152"/>
        <note>antagonist</note>
    </ligand>
</feature>
<feature type="glycosylation site" description="N-linked (GlcNAc...) asparagine" evidence="2">
    <location>
        <position position="12"/>
    </location>
</feature>
<feature type="glycosylation site" description="N-linked (GlcNAc...) asparagine" evidence="2">
    <location>
        <position position="19"/>
    </location>
</feature>
<feature type="glycosylation site" description="N-linked (GlcNAc...) asparagine" evidence="2">
    <location>
        <position position="97"/>
    </location>
</feature>
<feature type="glycosylation site" description="N-linked (GlcNAc...) asparagine" evidence="2">
    <location>
        <position position="173"/>
    </location>
</feature>
<feature type="disulfide bond" evidence="3 11 20">
    <location>
        <begin position="103"/>
        <end position="181"/>
    </location>
</feature>
<feature type="disulfide bond" evidence="3 11 20">
    <location>
        <begin position="355"/>
        <end position="358"/>
    </location>
</feature>
<feature type="splice variant" id="VSP_040570" description="In isoform 3." evidence="17">
    <original>SPTIAPKLSLEVRKLSNGRLSTSLKLGPLQPRGV</original>
    <variation>M</variation>
    <location>
        <begin position="287"/>
        <end position="320"/>
    </location>
</feature>
<feature type="sequence variant" id="VAR_003463" description="In dbSNP:rs6280." evidence="4 5 6 8 9 14 15 16">
    <original>G</original>
    <variation>S</variation>
    <location>
        <position position="9"/>
    </location>
</feature>
<feature type="sequence conflict" description="In Ref. 7; AAH95510." evidence="18" ref="7">
    <original>K</original>
    <variation>L</variation>
    <location>
        <position position="396"/>
    </location>
</feature>
<feature type="helix" evidence="21">
    <location>
        <begin position="34"/>
        <end position="56"/>
    </location>
</feature>
<feature type="helix" evidence="22">
    <location>
        <begin position="58"/>
        <end position="60"/>
    </location>
</feature>
<feature type="helix" evidence="21">
    <location>
        <begin position="63"/>
        <end position="81"/>
    </location>
</feature>
<feature type="helix" evidence="21">
    <location>
        <begin position="83"/>
        <end position="92"/>
    </location>
</feature>
<feature type="helix" evidence="21">
    <location>
        <begin position="100"/>
        <end position="133"/>
    </location>
</feature>
<feature type="helix" evidence="21">
    <location>
        <begin position="135"/>
        <end position="138"/>
    </location>
</feature>
<feature type="helix" evidence="21">
    <location>
        <begin position="139"/>
        <end position="141"/>
    </location>
</feature>
<feature type="helix" evidence="21">
    <location>
        <begin position="144"/>
        <end position="169"/>
    </location>
</feature>
<feature type="turn" evidence="22">
    <location>
        <begin position="170"/>
        <end position="172"/>
    </location>
</feature>
<feature type="helix" evidence="21">
    <location>
        <begin position="186"/>
        <end position="196"/>
    </location>
</feature>
<feature type="helix" evidence="21">
    <location>
        <begin position="198"/>
        <end position="222"/>
    </location>
</feature>
<feature type="helix" evidence="21">
    <location>
        <begin position="322"/>
        <end position="354"/>
    </location>
</feature>
<feature type="helix" evidence="21">
    <location>
        <begin position="362"/>
        <end position="384"/>
    </location>
</feature>
<feature type="helix" evidence="21">
    <location>
        <begin position="388"/>
        <end position="399"/>
    </location>
</feature>
<gene>
    <name evidence="19" type="primary">DRD3</name>
</gene>
<protein>
    <recommendedName>
        <fullName evidence="18">D(3) dopamine receptor</fullName>
    </recommendedName>
    <alternativeName>
        <fullName>Dopamine D3 receptor</fullName>
    </alternativeName>
</protein>
<keyword id="KW-0002">3D-structure</keyword>
<keyword id="KW-0025">Alternative splicing</keyword>
<keyword id="KW-1003">Cell membrane</keyword>
<keyword id="KW-1015">Disulfide bond</keyword>
<keyword id="KW-0297">G-protein coupled receptor</keyword>
<keyword id="KW-0325">Glycoprotein</keyword>
<keyword id="KW-0449">Lipoprotein</keyword>
<keyword id="KW-0472">Membrane</keyword>
<keyword id="KW-0564">Palmitate</keyword>
<keyword id="KW-0675">Receptor</keyword>
<keyword id="KW-1185">Reference proteome</keyword>
<keyword id="KW-1211">Schizophrenia</keyword>
<keyword id="KW-0807">Transducer</keyword>
<keyword id="KW-0812">Transmembrane</keyword>
<keyword id="KW-1133">Transmembrane helix</keyword>
<organism>
    <name type="scientific">Homo sapiens</name>
    <name type="common">Human</name>
    <dbReference type="NCBI Taxonomy" id="9606"/>
    <lineage>
        <taxon>Eukaryota</taxon>
        <taxon>Metazoa</taxon>
        <taxon>Chordata</taxon>
        <taxon>Craniata</taxon>
        <taxon>Vertebrata</taxon>
        <taxon>Euteleostomi</taxon>
        <taxon>Mammalia</taxon>
        <taxon>Eutheria</taxon>
        <taxon>Euarchontoglires</taxon>
        <taxon>Primates</taxon>
        <taxon>Haplorrhini</taxon>
        <taxon>Catarrhini</taxon>
        <taxon>Hominidae</taxon>
        <taxon>Homo</taxon>
    </lineage>
</organism>
<proteinExistence type="evidence at protein level"/>
<evidence type="ECO:0000250" key="1">
    <source>
        <dbReference type="UniProtKB" id="P19020"/>
    </source>
</evidence>
<evidence type="ECO:0000255" key="2"/>
<evidence type="ECO:0000255" key="3">
    <source>
        <dbReference type="PROSITE-ProRule" id="PRU00521"/>
    </source>
</evidence>
<evidence type="ECO:0000269" key="4">
    <source>
    </source>
</evidence>
<evidence type="ECO:0000269" key="5">
    <source>
    </source>
</evidence>
<evidence type="ECO:0000269" key="6">
    <source>
    </source>
</evidence>
<evidence type="ECO:0000269" key="7">
    <source>
    </source>
</evidence>
<evidence type="ECO:0000269" key="8">
    <source>
    </source>
</evidence>
<evidence type="ECO:0000269" key="9">
    <source>
    </source>
</evidence>
<evidence type="ECO:0000269" key="10">
    <source>
    </source>
</evidence>
<evidence type="ECO:0000269" key="11">
    <source>
    </source>
</evidence>
<evidence type="ECO:0000269" key="12">
    <source>
    </source>
</evidence>
<evidence type="ECO:0000269" key="13">
    <source>
    </source>
</evidence>
<evidence type="ECO:0000269" key="14">
    <source>
    </source>
</evidence>
<evidence type="ECO:0000269" key="15">
    <source>
    </source>
</evidence>
<evidence type="ECO:0000269" key="16">
    <source ref="15"/>
</evidence>
<evidence type="ECO:0000303" key="17">
    <source>
    </source>
</evidence>
<evidence type="ECO:0000305" key="18"/>
<evidence type="ECO:0000312" key="19">
    <source>
        <dbReference type="HGNC" id="HGNC:3024"/>
    </source>
</evidence>
<evidence type="ECO:0007744" key="20">
    <source>
        <dbReference type="PDB" id="3PBL"/>
    </source>
</evidence>
<evidence type="ECO:0007829" key="21">
    <source>
        <dbReference type="PDB" id="7CMV"/>
    </source>
</evidence>
<evidence type="ECO:0007829" key="22">
    <source>
        <dbReference type="PDB" id="8IRT"/>
    </source>
</evidence>
<sequence>MASLSQLSGHLNYTCGAENSTGASQARPHAYYALSYCALILAIVFGNGLVCMAVLKERALQTTTNYLVVSLAVADLLVATLVMPWVVYLEVTGGVWNFSRICCDVFVTLDVMMCTASILNLCAISIDRYTAVVMPVHYQHGTGQSSCRRVALMITAVWVLAFAVSCPLLFGFNTTGDPTVCSISNPDFVIYSSVVSFYLPFGVTVLVYARIYVVLKQRRRKRILTRQNSQCNSVRPGFPQQTLSPDPAHLELKRYYSICQDTALGGPGFQERGGELKREEKTRNSLSPTIAPKLSLEVRKLSNGRLSTSLKLGPLQPRGVPLREKKATQMVAIVLGAFIVCWLPFFLTHVLNTHCQTCHVSPELYSATTWLGYVNSALNPVIYTTFNIEFRKAFLKILSC</sequence>
<comment type="function">
    <text evidence="10">Dopamine receptor whose activity is mediated by G proteins which inhibit adenylyl cyclase. Promotes cell proliferation.</text>
</comment>
<comment type="subunit">
    <text evidence="1 7 10 12">Interacts with CLIC6 (By similarity). Interacts with GRK4 (PubMed:19520868). Interacts with PALM (PubMed:16386234). Interacts with FLNA (via filamin repeat 21); increases PKA-mediated phosphorylation of FLNA (PubMed:26460884).</text>
</comment>
<comment type="subcellular location">
    <subcellularLocation>
        <location evidence="10">Cell membrane</location>
        <topology evidence="10">Multi-pass membrane protein</topology>
    </subcellularLocation>
    <text>Both membrane-bound and scattered in the cytoplasm during basal conditions. Receptor stimulation results in the rapid internalization and sequestration of the receptors at the perinuclear area (5 and 15 minutes), followed by the dispersal of the receptors to the membrane (30 minutes). DRD3 and GRK4 co-localize in lipid rafts of renal proximal tubule cells.</text>
</comment>
<comment type="alternative products">
    <event type="alternative splicing"/>
    <isoform>
        <id>P35462-1</id>
        <name>1</name>
        <name>D3</name>
        <sequence type="displayed"/>
    </isoform>
    <isoform>
        <id>P35462-3</id>
        <name>3</name>
        <sequence type="described" ref="VSP_040570"/>
    </isoform>
</comment>
<comment type="tissue specificity">
    <text>Brain.</text>
</comment>
<comment type="PTM">
    <text evidence="10">Phosphorylated by GRK4 (GRK4-alpha and GRK4-gamma).</text>
</comment>
<comment type="PTM">
    <text evidence="13">Palmitoylated.</text>
</comment>
<comment type="disease" evidence="8 9">
    <disease id="DI-02733">
        <name>Tremor, hereditary essential 1</name>
        <acronym>ETM1</acronym>
        <description>A common movement disorder mainly characterized by postural tremor of the arms. Head, legs, trunk, voice, jaw, and facial muscles may also be involved. The condition can be aggravated by emotions, hunger, fatigue and temperature extremes, and may cause a functional disability or even incapacitation. Inheritance is autosomal dominant.</description>
        <dbReference type="MIM" id="190300"/>
    </disease>
    <text evidence="8 9">Disease susceptibility is associated with variants affecting the gene represented in this entry. Glycine at position 9 results in gain of function and is associated with susceptibility to essential tremor.</text>
</comment>
<comment type="disease" evidence="5 15">
    <disease id="DI-03626">
        <name>Schizophrenia</name>
        <acronym>SCZD</acronym>
        <description>A complex, multifactorial psychotic disorder or group of disorders characterized by disturbances in the form and content of thought (e.g. delusions, hallucinations), in mood (e.g. inappropriate affect), in sense of self and relationship to the external world (e.g. loss of ego boundaries, withdrawal), and in behavior (e.g bizarre or apparently purposeless behavior). Although it affects emotions, it is distinguished from mood disorders in which such disturbances are primary. Similarly, there may be mild impairment of cognitive function, and it is distinguished from the dementias in which disturbed cognitive function is considered primary. Some patients manifest schizophrenic as well as bipolar disorder symptoms and are often given the diagnosis of schizoaffective disorder.</description>
        <dbReference type="MIM" id="181500"/>
    </disease>
    <text evidence="5 15">Disease susceptibility may be associated with variants affecting the gene represented in this entry. Glycine at position 9 results in gain of function and may be a risk factor for schizophrenia.</text>
</comment>
<comment type="similarity">
    <text evidence="3">Belongs to the G-protein coupled receptor 1 family.</text>
</comment>
<comment type="sequence caution" evidence="18">
    <conflict type="frameshift">
        <sequence resource="EMBL-CDS" id="AAA03543"/>
    </conflict>
</comment>
<comment type="sequence caution" evidence="18">
    <conflict type="erroneous gene model prediction">
        <sequence resource="EMBL-CDS" id="AAA64369"/>
    </conflict>
</comment>
<dbReference type="EMBL" id="L20469">
    <property type="protein sequence ID" value="AAA03543.1"/>
    <property type="status" value="ALT_FRAME"/>
    <property type="molecule type" value="mRNA"/>
</dbReference>
<dbReference type="EMBL" id="AH003061">
    <property type="protein sequence ID" value="AAA64369.1"/>
    <property type="status" value="ALT_SEQ"/>
    <property type="molecule type" value="Genomic_DNA"/>
</dbReference>
<dbReference type="EMBL" id="U32499">
    <property type="protein sequence ID" value="AAA73929.1"/>
    <property type="molecule type" value="mRNA"/>
</dbReference>
<dbReference type="EMBL" id="AC092896">
    <property type="status" value="NOT_ANNOTATED_CDS"/>
    <property type="molecule type" value="Genomic_DNA"/>
</dbReference>
<dbReference type="EMBL" id="CH471052">
    <property type="protein sequence ID" value="EAW79610.1"/>
    <property type="molecule type" value="Genomic_DNA"/>
</dbReference>
<dbReference type="EMBL" id="BC095510">
    <property type="protein sequence ID" value="AAH95510.1"/>
    <property type="molecule type" value="mRNA"/>
</dbReference>
<dbReference type="EMBL" id="BC128123">
    <property type="protein sequence ID" value="AAI28124.1"/>
    <property type="molecule type" value="mRNA"/>
</dbReference>
<dbReference type="CCDS" id="CCDS2978.1">
    <molecule id="P35462-1"/>
</dbReference>
<dbReference type="CCDS" id="CCDS33829.1">
    <molecule id="P35462-3"/>
</dbReference>
<dbReference type="PIR" id="A48258">
    <property type="entry name" value="A48258"/>
</dbReference>
<dbReference type="PIR" id="A55419">
    <property type="entry name" value="A55419"/>
</dbReference>
<dbReference type="PIR" id="G01977">
    <property type="entry name" value="G01977"/>
</dbReference>
<dbReference type="RefSeq" id="NP_000787.2">
    <molecule id="P35462-1"/>
    <property type="nucleotide sequence ID" value="NM_000796.6"/>
</dbReference>
<dbReference type="RefSeq" id="NP_001269492.1">
    <molecule id="P35462-1"/>
    <property type="nucleotide sequence ID" value="NM_001282563.2"/>
</dbReference>
<dbReference type="RefSeq" id="NP_001277738.1">
    <molecule id="P35462-1"/>
    <property type="nucleotide sequence ID" value="NM_001290809.1"/>
</dbReference>
<dbReference type="RefSeq" id="NP_387512.3">
    <molecule id="P35462-3"/>
    <property type="nucleotide sequence ID" value="NM_033663.6"/>
</dbReference>
<dbReference type="RefSeq" id="XP_016861318.1">
    <property type="nucleotide sequence ID" value="XM_017005829.1"/>
</dbReference>
<dbReference type="PDB" id="3PBL">
    <property type="method" value="X-ray"/>
    <property type="resolution" value="2.89 A"/>
    <property type="chains" value="A/B=2-221, A/B=319-400"/>
</dbReference>
<dbReference type="PDB" id="7CMU">
    <property type="method" value="EM"/>
    <property type="resolution" value="3.00 A"/>
    <property type="chains" value="R=1-400"/>
</dbReference>
<dbReference type="PDB" id="7CMV">
    <property type="method" value="EM"/>
    <property type="resolution" value="2.70 A"/>
    <property type="chains" value="R=1-400"/>
</dbReference>
<dbReference type="PDB" id="8IRT">
    <property type="method" value="EM"/>
    <property type="resolution" value="2.70 A"/>
    <property type="chains" value="R=1-400"/>
</dbReference>
<dbReference type="PDB" id="9F33">
    <property type="method" value="EM"/>
    <property type="resolution" value="3.05 A"/>
    <property type="chains" value="R=4-400"/>
</dbReference>
<dbReference type="PDB" id="9F34">
    <property type="method" value="EM"/>
    <property type="resolution" value="3.09 A"/>
    <property type="chains" value="R=2-400"/>
</dbReference>
<dbReference type="PDBsum" id="3PBL"/>
<dbReference type="PDBsum" id="7CMU"/>
<dbReference type="PDBsum" id="7CMV"/>
<dbReference type="PDBsum" id="8IRT"/>
<dbReference type="PDBsum" id="9F33"/>
<dbReference type="PDBsum" id="9F34"/>
<dbReference type="EMDB" id="EMD-30410"/>
<dbReference type="EMDB" id="EMD-30411"/>
<dbReference type="EMDB" id="EMD-35685"/>
<dbReference type="EMDB" id="EMD-50168"/>
<dbReference type="EMDB" id="EMD-50169"/>
<dbReference type="SMR" id="P35462"/>
<dbReference type="BioGRID" id="108148">
    <property type="interactions" value="30"/>
</dbReference>
<dbReference type="CORUM" id="P35462"/>
<dbReference type="DIP" id="DIP-5976N"/>
<dbReference type="FunCoup" id="P35462">
    <property type="interactions" value="1012"/>
</dbReference>
<dbReference type="IntAct" id="P35462">
    <property type="interactions" value="20"/>
</dbReference>
<dbReference type="MINT" id="P35462"/>
<dbReference type="STRING" id="9606.ENSP00000373169"/>
<dbReference type="BindingDB" id="P35462"/>
<dbReference type="ChEMBL" id="CHEMBL234"/>
<dbReference type="DrugBank" id="DB06288">
    <property type="generic name" value="Amisulpride"/>
</dbReference>
<dbReference type="DrugBank" id="DB00543">
    <property type="generic name" value="Amoxapine"/>
</dbReference>
<dbReference type="DrugBank" id="DB00714">
    <property type="generic name" value="Apomorphine"/>
</dbReference>
<dbReference type="DrugBank" id="DB01238">
    <property type="generic name" value="Aripiprazole"/>
</dbReference>
<dbReference type="DrugBank" id="DB14185">
    <property type="generic name" value="Aripiprazole lauroxil"/>
</dbReference>
<dbReference type="DrugBank" id="DB09207">
    <property type="generic name" value="AS-8112"/>
</dbReference>
<dbReference type="DrugBank" id="DB06216">
    <property type="generic name" value="Asenapine"/>
</dbReference>
<dbReference type="DrugBank" id="DB11376">
    <property type="generic name" value="Azaperone"/>
</dbReference>
<dbReference type="DrugBank" id="DB09223">
    <property type="generic name" value="Blonanserin"/>
</dbReference>
<dbReference type="DrugBank" id="DB09128">
    <property type="generic name" value="Brexpiprazole"/>
</dbReference>
<dbReference type="DrugBank" id="DB01200">
    <property type="generic name" value="Bromocriptine"/>
</dbReference>
<dbReference type="DrugBank" id="DB00490">
    <property type="generic name" value="Buspirone"/>
</dbReference>
<dbReference type="DrugBank" id="DB00248">
    <property type="generic name" value="Cabergoline"/>
</dbReference>
<dbReference type="DrugBank" id="DB09014">
    <property type="generic name" value="Captodiame"/>
</dbReference>
<dbReference type="DrugBank" id="DB06016">
    <property type="generic name" value="Cariprazine"/>
</dbReference>
<dbReference type="DrugBank" id="DB00477">
    <property type="generic name" value="Chlorpromazine"/>
</dbReference>
<dbReference type="DrugBank" id="DB01239">
    <property type="generic name" value="Chlorprothixene"/>
</dbReference>
<dbReference type="DrugBank" id="DB00363">
    <property type="generic name" value="Clozapine"/>
</dbReference>
<dbReference type="DrugBank" id="DB11274">
    <property type="generic name" value="Dihydro-alpha-ergocryptine"/>
</dbReference>
<dbReference type="DrugBank" id="DB13345">
    <property type="generic name" value="Dihydroergocristine"/>
</dbReference>
<dbReference type="DrugBank" id="DB00320">
    <property type="generic name" value="Dihydroergotamine"/>
</dbReference>
<dbReference type="DrugBank" id="DB01184">
    <property type="generic name" value="Domperidone"/>
</dbReference>
<dbReference type="DrugBank" id="DB00988">
    <property type="generic name" value="Dopamine"/>
</dbReference>
<dbReference type="DrugBank" id="DB14844">
    <property type="generic name" value="Dordaviprone"/>
</dbReference>
<dbReference type="DrugBank" id="DB11275">
    <property type="generic name" value="Epicriptine"/>
</dbReference>
<dbReference type="DrugBank" id="DB01049">
    <property type="generic name" value="Ergoloid mesylate"/>
</dbReference>
<dbReference type="DrugBank" id="DB08868">
    <property type="generic name" value="Fingolimod"/>
</dbReference>
<dbReference type="DrugBank" id="DB00875">
    <property type="generic name" value="Flupentixol"/>
</dbReference>
<dbReference type="DrugBank" id="DB00502">
    <property type="generic name" value="Haloperidol"/>
</dbReference>
<dbReference type="DrugBank" id="DB04946">
    <property type="generic name" value="Iloperidone"/>
</dbReference>
<dbReference type="DrugBank" id="DB01235">
    <property type="generic name" value="Levodopa"/>
</dbReference>
<dbReference type="DrugBank" id="DB00589">
    <property type="generic name" value="Lisuride"/>
</dbReference>
<dbReference type="DrugBank" id="DB00408">
    <property type="generic name" value="Loxapine"/>
</dbReference>
<dbReference type="DrugBank" id="DB01403">
    <property type="generic name" value="Methotrimeprazine"/>
</dbReference>
<dbReference type="DrugBank" id="DB06148">
    <property type="generic name" value="Mianserin"/>
</dbReference>
<dbReference type="DrugBank" id="DB08804">
    <property type="generic name" value="Nandrolone decanoate"/>
</dbReference>
<dbReference type="DrugBank" id="DB05766">
    <property type="generic name" value="Norclozapine"/>
</dbReference>
<dbReference type="DrugBank" id="DB00334">
    <property type="generic name" value="Olanzapine"/>
</dbReference>
<dbReference type="DrugBank" id="DB01267">
    <property type="generic name" value="Paliperidone"/>
</dbReference>
<dbReference type="DrugBank" id="DB12061">
    <property type="generic name" value="Pardoprunox"/>
</dbReference>
<dbReference type="DrugBank" id="DB01186">
    <property type="generic name" value="Pergolide"/>
</dbReference>
<dbReference type="DrugBank" id="DB01100">
    <property type="generic name" value="Pimozide"/>
</dbReference>
<dbReference type="DrugBank" id="DB09286">
    <property type="generic name" value="Pipamperone"/>
</dbReference>
<dbReference type="DrugBank" id="DB12478">
    <property type="generic name" value="Piribedil"/>
</dbReference>
<dbReference type="DrugBank" id="DB00413">
    <property type="generic name" value="Pramipexole"/>
</dbReference>
<dbReference type="DrugBank" id="DB01224">
    <property type="generic name" value="Quetiapine"/>
</dbReference>
<dbReference type="DrugBank" id="DB00409">
    <property type="generic name" value="Remoxipride"/>
</dbReference>
<dbReference type="DrugBank" id="DB00268">
    <property type="generic name" value="Ropinirole"/>
</dbReference>
<dbReference type="DrugBank" id="DB05271">
    <property type="generic name" value="Rotigotine"/>
</dbReference>
<dbReference type="DrugBank" id="DB06454">
    <property type="generic name" value="Sarizotan"/>
</dbReference>
<dbReference type="DrugBank" id="DB17056">
    <property type="generic name" value="Spiperone"/>
</dbReference>
<dbReference type="DrugBank" id="DB00391">
    <property type="generic name" value="Sulpiride"/>
</dbReference>
<dbReference type="DrugBank" id="DB06477">
    <property type="generic name" value="Sumanirole"/>
</dbReference>
<dbReference type="DrugBank" id="DB09289">
    <property type="generic name" value="Tianeptine"/>
</dbReference>
<dbReference type="DrugBank" id="DB13025">
    <property type="generic name" value="Tiapride"/>
</dbReference>
<dbReference type="DrugBank" id="DB18794">
    <property type="generic name" value="Trazpiroben"/>
</dbReference>
<dbReference type="DrugBank" id="DB01392">
    <property type="generic name" value="Yohimbine"/>
</dbReference>
<dbReference type="DrugBank" id="DB00246">
    <property type="generic name" value="Ziprasidone"/>
</dbReference>
<dbReference type="DrugCentral" id="P35462"/>
<dbReference type="GuidetoPHARMACOLOGY" id="216"/>
<dbReference type="TCDB" id="9.A.14.3.9">
    <property type="family name" value="the g-protein-coupled receptor (gpcr) family"/>
</dbReference>
<dbReference type="GlyCosmos" id="P35462">
    <property type="glycosylation" value="4 sites, No reported glycans"/>
</dbReference>
<dbReference type="GlyGen" id="P35462">
    <property type="glycosylation" value="4 sites"/>
</dbReference>
<dbReference type="iPTMnet" id="P35462"/>
<dbReference type="PhosphoSitePlus" id="P35462"/>
<dbReference type="SwissPalm" id="P35462"/>
<dbReference type="BioMuta" id="DRD3"/>
<dbReference type="DMDM" id="1169206"/>
<dbReference type="PaxDb" id="9606-ENSP00000373169"/>
<dbReference type="PeptideAtlas" id="P35462"/>
<dbReference type="ABCD" id="P35462">
    <property type="antibodies" value="1 sequenced antibody"/>
</dbReference>
<dbReference type="Antibodypedia" id="16482">
    <property type="antibodies" value="288 antibodies from 38 providers"/>
</dbReference>
<dbReference type="DNASU" id="1814"/>
<dbReference type="Ensembl" id="ENST00000295881.9">
    <molecule id="P35462-3"/>
    <property type="protein sequence ID" value="ENSP00000295881.6"/>
    <property type="gene ID" value="ENSG00000151577.14"/>
</dbReference>
<dbReference type="Ensembl" id="ENST00000383673.5">
    <molecule id="P35462-1"/>
    <property type="protein sequence ID" value="ENSP00000373169.2"/>
    <property type="gene ID" value="ENSG00000151577.14"/>
</dbReference>
<dbReference type="Ensembl" id="ENST00000460779.5">
    <molecule id="P35462-1"/>
    <property type="protein sequence ID" value="ENSP00000419402.1"/>
    <property type="gene ID" value="ENSG00000151577.14"/>
</dbReference>
<dbReference type="Ensembl" id="ENST00000467632.5">
    <molecule id="P35462-1"/>
    <property type="protein sequence ID" value="ENSP00000420662.1"/>
    <property type="gene ID" value="ENSG00000151577.14"/>
</dbReference>
<dbReference type="GeneID" id="1814"/>
<dbReference type="KEGG" id="hsa:1814"/>
<dbReference type="MANE-Select" id="ENST00000383673.5">
    <property type="protein sequence ID" value="ENSP00000373169.2"/>
    <property type="RefSeq nucleotide sequence ID" value="NM_000796.6"/>
    <property type="RefSeq protein sequence ID" value="NP_000787.2"/>
</dbReference>
<dbReference type="AGR" id="HGNC:3024"/>
<dbReference type="CTD" id="1814"/>
<dbReference type="DisGeNET" id="1814"/>
<dbReference type="GeneCards" id="DRD3"/>
<dbReference type="HGNC" id="HGNC:3024">
    <property type="gene designation" value="DRD3"/>
</dbReference>
<dbReference type="HPA" id="ENSG00000151577">
    <property type="expression patterns" value="Tissue enriched (brain)"/>
</dbReference>
<dbReference type="MalaCards" id="DRD3"/>
<dbReference type="MIM" id="126451">
    <property type="type" value="gene"/>
</dbReference>
<dbReference type="MIM" id="181500">
    <property type="type" value="phenotype"/>
</dbReference>
<dbReference type="MIM" id="190300">
    <property type="type" value="phenotype"/>
</dbReference>
<dbReference type="neXtProt" id="NX_P35462"/>
<dbReference type="OpenTargets" id="ENSG00000151577"/>
<dbReference type="PharmGKB" id="PA27479"/>
<dbReference type="VEuPathDB" id="HostDB:ENSG00000151577"/>
<dbReference type="eggNOG" id="KOG3656">
    <property type="taxonomic scope" value="Eukaryota"/>
</dbReference>
<dbReference type="GeneTree" id="ENSGT00940000159661"/>
<dbReference type="InParanoid" id="P35462"/>
<dbReference type="OMA" id="SNGRMMT"/>
<dbReference type="OrthoDB" id="10034726at2759"/>
<dbReference type="PAN-GO" id="P35462">
    <property type="GO annotations" value="13 GO annotations based on evolutionary models"/>
</dbReference>
<dbReference type="PhylomeDB" id="P35462"/>
<dbReference type="TreeFam" id="TF334382"/>
<dbReference type="PathwayCommons" id="P35462"/>
<dbReference type="Reactome" id="R-HSA-390651">
    <property type="pathway name" value="Dopamine receptors"/>
</dbReference>
<dbReference type="Reactome" id="R-HSA-418594">
    <property type="pathway name" value="G alpha (i) signalling events"/>
</dbReference>
<dbReference type="SignaLink" id="P35462"/>
<dbReference type="SIGNOR" id="P35462"/>
<dbReference type="BioGRID-ORCS" id="1814">
    <property type="hits" value="7 hits in 1154 CRISPR screens"/>
</dbReference>
<dbReference type="EvolutionaryTrace" id="P35462"/>
<dbReference type="GenomeRNAi" id="1814"/>
<dbReference type="Pharos" id="P35462">
    <property type="development level" value="Tclin"/>
</dbReference>
<dbReference type="PRO" id="PR:P35462"/>
<dbReference type="Proteomes" id="UP000005640">
    <property type="component" value="Chromosome 3"/>
</dbReference>
<dbReference type="RNAct" id="P35462">
    <property type="molecule type" value="protein"/>
</dbReference>
<dbReference type="Bgee" id="ENSG00000151577">
    <property type="expression patterns" value="Expressed in male germ line stem cell (sensu Vertebrata) in testis and 14 other cell types or tissues"/>
</dbReference>
<dbReference type="ExpressionAtlas" id="P35462">
    <property type="expression patterns" value="baseline and differential"/>
</dbReference>
<dbReference type="GO" id="GO:0005886">
    <property type="term" value="C:plasma membrane"/>
    <property type="evidence" value="ECO:0000314"/>
    <property type="project" value="UniProtKB"/>
</dbReference>
<dbReference type="GO" id="GO:0045202">
    <property type="term" value="C:synapse"/>
    <property type="evidence" value="ECO:0007669"/>
    <property type="project" value="GOC"/>
</dbReference>
<dbReference type="GO" id="GO:0001591">
    <property type="term" value="F:dopamine neurotransmitter receptor activity, coupled via Gi/Go"/>
    <property type="evidence" value="ECO:0000314"/>
    <property type="project" value="BHF-UCL"/>
</dbReference>
<dbReference type="GO" id="GO:0004930">
    <property type="term" value="F:G protein-coupled receptor activity"/>
    <property type="evidence" value="ECO:0000318"/>
    <property type="project" value="GO_Central"/>
</dbReference>
<dbReference type="GO" id="GO:0046717">
    <property type="term" value="P:acid secretion"/>
    <property type="evidence" value="ECO:0000250"/>
    <property type="project" value="BHF-UCL"/>
</dbReference>
<dbReference type="GO" id="GO:0007191">
    <property type="term" value="P:adenylate cyclase-activating dopamine receptor signaling pathway"/>
    <property type="evidence" value="ECO:0000314"/>
    <property type="project" value="BHF-UCL"/>
</dbReference>
<dbReference type="GO" id="GO:0007195">
    <property type="term" value="P:adenylate cyclase-inhibiting dopamine receptor signaling pathway"/>
    <property type="evidence" value="ECO:0000314"/>
    <property type="project" value="BHF-UCL"/>
</dbReference>
<dbReference type="GO" id="GO:0050482">
    <property type="term" value="P:arachidonate secretion"/>
    <property type="evidence" value="ECO:0000314"/>
    <property type="project" value="BHF-UCL"/>
</dbReference>
<dbReference type="GO" id="GO:0048148">
    <property type="term" value="P:behavioral response to cocaine"/>
    <property type="evidence" value="ECO:0000270"/>
    <property type="project" value="BHF-UCL"/>
</dbReference>
<dbReference type="GO" id="GO:0032922">
    <property type="term" value="P:circadian regulation of gene expression"/>
    <property type="evidence" value="ECO:0000250"/>
    <property type="project" value="BHF-UCL"/>
</dbReference>
<dbReference type="GO" id="GO:0042417">
    <property type="term" value="P:dopamine metabolic process"/>
    <property type="evidence" value="ECO:0000305"/>
    <property type="project" value="BHF-UCL"/>
</dbReference>
<dbReference type="GO" id="GO:0002031">
    <property type="term" value="P:G protein-coupled receptor internalization"/>
    <property type="evidence" value="ECO:0000314"/>
    <property type="project" value="BHF-UCL"/>
</dbReference>
<dbReference type="GO" id="GO:0007186">
    <property type="term" value="P:G protein-coupled receptor signaling pathway"/>
    <property type="evidence" value="ECO:0000314"/>
    <property type="project" value="BHF-UCL"/>
</dbReference>
<dbReference type="GO" id="GO:0006874">
    <property type="term" value="P:intracellular calcium ion homeostasis"/>
    <property type="evidence" value="ECO:0000314"/>
    <property type="project" value="BHF-UCL"/>
</dbReference>
<dbReference type="GO" id="GO:0007612">
    <property type="term" value="P:learning"/>
    <property type="evidence" value="ECO:0000303"/>
    <property type="project" value="BHF-UCL"/>
</dbReference>
<dbReference type="GO" id="GO:0007611">
    <property type="term" value="P:learning or memory"/>
    <property type="evidence" value="ECO:0000303"/>
    <property type="project" value="BHF-UCL"/>
</dbReference>
<dbReference type="GO" id="GO:0007626">
    <property type="term" value="P:locomotory behavior"/>
    <property type="evidence" value="ECO:0000250"/>
    <property type="project" value="BHF-UCL"/>
</dbReference>
<dbReference type="GO" id="GO:0050883">
    <property type="term" value="P:musculoskeletal movement, spinal reflex action"/>
    <property type="evidence" value="ECO:0000250"/>
    <property type="project" value="BHF-UCL"/>
</dbReference>
<dbReference type="GO" id="GO:0045776">
    <property type="term" value="P:negative regulation of blood pressure"/>
    <property type="evidence" value="ECO:0000250"/>
    <property type="project" value="BHF-UCL"/>
</dbReference>
<dbReference type="GO" id="GO:0051481">
    <property type="term" value="P:negative regulation of cytosolic calcium ion concentration"/>
    <property type="evidence" value="ECO:0000318"/>
    <property type="project" value="GO_Central"/>
</dbReference>
<dbReference type="GO" id="GO:0048715">
    <property type="term" value="P:negative regulation of oligodendrocyte differentiation"/>
    <property type="evidence" value="ECO:0000250"/>
    <property type="project" value="BHF-UCL"/>
</dbReference>
<dbReference type="GO" id="GO:0051898">
    <property type="term" value="P:negative regulation of phosphatidylinositol 3-kinase/protein kinase B signal transduction"/>
    <property type="evidence" value="ECO:0000250"/>
    <property type="project" value="BHF-UCL"/>
</dbReference>
<dbReference type="GO" id="GO:0050709">
    <property type="term" value="P:negative regulation of protein secretion"/>
    <property type="evidence" value="ECO:0000314"/>
    <property type="project" value="BHF-UCL"/>
</dbReference>
<dbReference type="GO" id="GO:0051967">
    <property type="term" value="P:negative regulation of synaptic transmission, glutamatergic"/>
    <property type="evidence" value="ECO:0000318"/>
    <property type="project" value="GO_Central"/>
</dbReference>
<dbReference type="GO" id="GO:0060158">
    <property type="term" value="P:phospholipase C-activating dopamine receptor signaling pathway"/>
    <property type="evidence" value="ECO:0000318"/>
    <property type="project" value="GO_Central"/>
</dbReference>
<dbReference type="GO" id="GO:0032467">
    <property type="term" value="P:positive regulation of cytokinesis"/>
    <property type="evidence" value="ECO:0000315"/>
    <property type="project" value="UniProtKB"/>
</dbReference>
<dbReference type="GO" id="GO:0060161">
    <property type="term" value="P:positive regulation of dopamine receptor signaling pathway"/>
    <property type="evidence" value="ECO:0000250"/>
    <property type="project" value="BHF-UCL"/>
</dbReference>
<dbReference type="GO" id="GO:0045840">
    <property type="term" value="P:positive regulation of mitotic nuclear division"/>
    <property type="evidence" value="ECO:0000250"/>
    <property type="project" value="BHF-UCL"/>
</dbReference>
<dbReference type="GO" id="GO:0060134">
    <property type="term" value="P:prepulse inhibition"/>
    <property type="evidence" value="ECO:0000315"/>
    <property type="project" value="BHF-UCL"/>
</dbReference>
<dbReference type="GO" id="GO:0014059">
    <property type="term" value="P:regulation of dopamine secretion"/>
    <property type="evidence" value="ECO:0000250"/>
    <property type="project" value="BHF-UCL"/>
</dbReference>
<dbReference type="GO" id="GO:0051584">
    <property type="term" value="P:regulation of dopamine uptake involved in synaptic transmission"/>
    <property type="evidence" value="ECO:0000305"/>
    <property type="project" value="BHF-UCL"/>
</dbReference>
<dbReference type="GO" id="GO:0043266">
    <property type="term" value="P:regulation of potassium ion transport"/>
    <property type="evidence" value="ECO:0000318"/>
    <property type="project" value="GO_Central"/>
</dbReference>
<dbReference type="GO" id="GO:0042220">
    <property type="term" value="P:response to cocaine"/>
    <property type="evidence" value="ECO:0000270"/>
    <property type="project" value="BHF-UCL"/>
</dbReference>
<dbReference type="GO" id="GO:0034776">
    <property type="term" value="P:response to histamine"/>
    <property type="evidence" value="ECO:0000314"/>
    <property type="project" value="BHF-UCL"/>
</dbReference>
<dbReference type="GO" id="GO:0043278">
    <property type="term" value="P:response to morphine"/>
    <property type="evidence" value="ECO:0000250"/>
    <property type="project" value="BHF-UCL"/>
</dbReference>
<dbReference type="GO" id="GO:0009410">
    <property type="term" value="P:response to xenobiotic stimulus"/>
    <property type="evidence" value="ECO:0000250"/>
    <property type="project" value="BHF-UCL"/>
</dbReference>
<dbReference type="GO" id="GO:0035176">
    <property type="term" value="P:social behavior"/>
    <property type="evidence" value="ECO:0000303"/>
    <property type="project" value="BHF-UCL"/>
</dbReference>
<dbReference type="GO" id="GO:0008542">
    <property type="term" value="P:visual learning"/>
    <property type="evidence" value="ECO:0000250"/>
    <property type="project" value="BHF-UCL"/>
</dbReference>
<dbReference type="CDD" id="cd15310">
    <property type="entry name" value="7tmA_D3_dopamine_R"/>
    <property type="match status" value="1"/>
</dbReference>
<dbReference type="FunFam" id="1.20.1070.10:FF:000287">
    <property type="entry name" value="Dopamine receptor D3"/>
    <property type="match status" value="1"/>
</dbReference>
<dbReference type="Gene3D" id="1.20.1070.10">
    <property type="entry name" value="Rhodopsin 7-helix transmembrane proteins"/>
    <property type="match status" value="1"/>
</dbReference>
<dbReference type="InterPro" id="IPR001620">
    <property type="entry name" value="Dopamine_D3_rcpt"/>
</dbReference>
<dbReference type="InterPro" id="IPR000929">
    <property type="entry name" value="Dopamine_rcpt"/>
</dbReference>
<dbReference type="InterPro" id="IPR000276">
    <property type="entry name" value="GPCR_Rhodpsn"/>
</dbReference>
<dbReference type="InterPro" id="IPR017452">
    <property type="entry name" value="GPCR_Rhodpsn_7TM"/>
</dbReference>
<dbReference type="PANTHER" id="PTHR24248">
    <property type="entry name" value="ADRENERGIC RECEPTOR-RELATED G-PROTEIN COUPLED RECEPTOR"/>
    <property type="match status" value="1"/>
</dbReference>
<dbReference type="PANTHER" id="PTHR24248:SF154">
    <property type="entry name" value="D(3) DOPAMINE RECEPTOR"/>
    <property type="match status" value="1"/>
</dbReference>
<dbReference type="Pfam" id="PF00001">
    <property type="entry name" value="7tm_1"/>
    <property type="match status" value="1"/>
</dbReference>
<dbReference type="PRINTS" id="PR00568">
    <property type="entry name" value="DOPAMINED3R"/>
</dbReference>
<dbReference type="PRINTS" id="PR00242">
    <property type="entry name" value="DOPAMINER"/>
</dbReference>
<dbReference type="PRINTS" id="PR00237">
    <property type="entry name" value="GPCRRHODOPSN"/>
</dbReference>
<dbReference type="SMART" id="SM01381">
    <property type="entry name" value="7TM_GPCR_Srsx"/>
    <property type="match status" value="1"/>
</dbReference>
<dbReference type="SUPFAM" id="SSF81321">
    <property type="entry name" value="Family A G protein-coupled receptor-like"/>
    <property type="match status" value="1"/>
</dbReference>
<dbReference type="PROSITE" id="PS00237">
    <property type="entry name" value="G_PROTEIN_RECEP_F1_1"/>
    <property type="match status" value="1"/>
</dbReference>
<dbReference type="PROSITE" id="PS50262">
    <property type="entry name" value="G_PROTEIN_RECEP_F1_2"/>
    <property type="match status" value="1"/>
</dbReference>